<accession>Q8LFL8</accession>
<accession>Q9LJI0</accession>
<name>LSM1B_ARATH</name>
<proteinExistence type="evidence at protein level"/>
<dbReference type="EMBL" id="AP000600">
    <property type="protein sequence ID" value="BAB02972.1"/>
    <property type="status" value="ALT_SEQ"/>
    <property type="molecule type" value="Genomic_DNA"/>
</dbReference>
<dbReference type="EMBL" id="CP002686">
    <property type="protein sequence ID" value="AEE75465.1"/>
    <property type="molecule type" value="Genomic_DNA"/>
</dbReference>
<dbReference type="EMBL" id="CP002686">
    <property type="protein sequence ID" value="AEE75466.1"/>
    <property type="molecule type" value="Genomic_DNA"/>
</dbReference>
<dbReference type="EMBL" id="BT002795">
    <property type="protein sequence ID" value="AAO22620.1"/>
    <property type="molecule type" value="mRNA"/>
</dbReference>
<dbReference type="EMBL" id="BT004340">
    <property type="protein sequence ID" value="AAO42334.1"/>
    <property type="molecule type" value="mRNA"/>
</dbReference>
<dbReference type="EMBL" id="AY084768">
    <property type="protein sequence ID" value="AAM61336.1"/>
    <property type="molecule type" value="mRNA"/>
</dbReference>
<dbReference type="RefSeq" id="NP_001326377.1">
    <property type="nucleotide sequence ID" value="NM_001338101.1"/>
</dbReference>
<dbReference type="RefSeq" id="NP_566476.1">
    <property type="nucleotide sequence ID" value="NM_112264.4"/>
</dbReference>
<dbReference type="RefSeq" id="NP_850580.1">
    <property type="nucleotide sequence ID" value="NM_180249.4"/>
</dbReference>
<dbReference type="SMR" id="Q8LFL8"/>
<dbReference type="ComplexPortal" id="CPX-1347">
    <property type="entry name" value="LSM1-7-PAT1 complex, variant LSM1B-LSM3A-LSM6A-PAT1"/>
</dbReference>
<dbReference type="ComplexPortal" id="CPX-1348">
    <property type="entry name" value="LSM1-7-PAT1 complex, variant LSM1B-LSM3B-LSM6A-PAT1"/>
</dbReference>
<dbReference type="ComplexPortal" id="CPX-1349">
    <property type="entry name" value="LSM1-7-PAT1 complex, variant LSM1B-LSM3B-LSM6B-PAT1"/>
</dbReference>
<dbReference type="ComplexPortal" id="CPX-1350">
    <property type="entry name" value="LSM1-7-PAT1 complex, variant LSM1B-LSM3A-LSM6B-PAT1"/>
</dbReference>
<dbReference type="ComplexPortal" id="CPX-1395">
    <property type="entry name" value="LSM1-7-PAT1 complex, variant LSM1B-LSM3A-LSM6A-PAT1H1"/>
</dbReference>
<dbReference type="ComplexPortal" id="CPX-1396">
    <property type="entry name" value="LSM1-7-PAT1 complex, variant LSM1B-LSM3A-LSM6B-PAT1H1"/>
</dbReference>
<dbReference type="ComplexPortal" id="CPX-1397">
    <property type="entry name" value="LSM1-7-PAT1 complex, variant LSM1B-LSM3B-LSM6A-PAT1H1"/>
</dbReference>
<dbReference type="ComplexPortal" id="CPX-1398">
    <property type="entry name" value="LSM1-7-PAT1 complex, variant LSM1B-LSM3B-LSM6B-PAT1H1"/>
</dbReference>
<dbReference type="ComplexPortal" id="CPX-1403">
    <property type="entry name" value="LSM1-7-PAT1 complex, variant LSM1B-LSM3A-LSM6A-PAT1H2"/>
</dbReference>
<dbReference type="ComplexPortal" id="CPX-1404">
    <property type="entry name" value="LSM1-7-PAT1 complex, variant LSM1B-LSM3A-LSM6B-PAT1H2"/>
</dbReference>
<dbReference type="ComplexPortal" id="CPX-1405">
    <property type="entry name" value="LSM1-7-PAT1 complex, variant LSM1B-LSM3B-LSM6A-PAT1H2"/>
</dbReference>
<dbReference type="ComplexPortal" id="CPX-1406">
    <property type="entry name" value="LSM1-7-PAT1 complex, variant LSM1B-LSM3B-LSM6B-PAT1H2"/>
</dbReference>
<dbReference type="FunCoup" id="Q8LFL8">
    <property type="interactions" value="4162"/>
</dbReference>
<dbReference type="IntAct" id="Q8LFL8">
    <property type="interactions" value="6"/>
</dbReference>
<dbReference type="STRING" id="3702.Q8LFL8"/>
<dbReference type="PaxDb" id="3702-AT3G14080.2"/>
<dbReference type="ProteomicsDB" id="238567"/>
<dbReference type="EnsemblPlants" id="AT3G14080.1">
    <property type="protein sequence ID" value="AT3G14080.1"/>
    <property type="gene ID" value="AT3G14080"/>
</dbReference>
<dbReference type="EnsemblPlants" id="AT3G14080.2">
    <property type="protein sequence ID" value="AT3G14080.2"/>
    <property type="gene ID" value="AT3G14080"/>
</dbReference>
<dbReference type="GeneID" id="820624"/>
<dbReference type="Gramene" id="AT3G14080.1">
    <property type="protein sequence ID" value="AT3G14080.1"/>
    <property type="gene ID" value="AT3G14080"/>
</dbReference>
<dbReference type="Gramene" id="AT3G14080.2">
    <property type="protein sequence ID" value="AT3G14080.2"/>
    <property type="gene ID" value="AT3G14080"/>
</dbReference>
<dbReference type="KEGG" id="ath:AT3G14080"/>
<dbReference type="Araport" id="AT3G14080"/>
<dbReference type="TAIR" id="AT3G14080">
    <property type="gene designation" value="LSM1B"/>
</dbReference>
<dbReference type="eggNOG" id="KOG1782">
    <property type="taxonomic scope" value="Eukaryota"/>
</dbReference>
<dbReference type="HOGENOM" id="CLU_076902_0_2_1"/>
<dbReference type="InParanoid" id="Q8LFL8"/>
<dbReference type="OrthoDB" id="10263346at2759"/>
<dbReference type="PhylomeDB" id="Q8LFL8"/>
<dbReference type="PRO" id="PR:Q8LFL8"/>
<dbReference type="Proteomes" id="UP000006548">
    <property type="component" value="Chromosome 3"/>
</dbReference>
<dbReference type="ExpressionAtlas" id="Q8LFL8">
    <property type="expression patterns" value="baseline and differential"/>
</dbReference>
<dbReference type="GO" id="GO:0005829">
    <property type="term" value="C:cytosol"/>
    <property type="evidence" value="ECO:0007005"/>
    <property type="project" value="TAIR"/>
</dbReference>
<dbReference type="GO" id="GO:1990726">
    <property type="term" value="C:Lsm1-7-Pat1 complex"/>
    <property type="evidence" value="ECO:0000303"/>
    <property type="project" value="ComplexPortal"/>
</dbReference>
<dbReference type="GO" id="GO:0000932">
    <property type="term" value="C:P-body"/>
    <property type="evidence" value="ECO:0000314"/>
    <property type="project" value="TAIR"/>
</dbReference>
<dbReference type="GO" id="GO:1990904">
    <property type="term" value="C:ribonucleoprotein complex"/>
    <property type="evidence" value="ECO:0007669"/>
    <property type="project" value="UniProtKB-KW"/>
</dbReference>
<dbReference type="GO" id="GO:0003723">
    <property type="term" value="F:RNA binding"/>
    <property type="evidence" value="ECO:0000314"/>
    <property type="project" value="TAIR"/>
</dbReference>
<dbReference type="GO" id="GO:0009631">
    <property type="term" value="P:cold acclimation"/>
    <property type="evidence" value="ECO:0000315"/>
    <property type="project" value="TAIR"/>
</dbReference>
<dbReference type="GO" id="GO:0000290">
    <property type="term" value="P:deadenylation-dependent decapping of nuclear-transcribed mRNA"/>
    <property type="evidence" value="ECO:0000303"/>
    <property type="project" value="ComplexPortal"/>
</dbReference>
<dbReference type="GO" id="GO:0042538">
    <property type="term" value="P:hyperosmotic salinity response"/>
    <property type="evidence" value="ECO:0000315"/>
    <property type="project" value="TAIR"/>
</dbReference>
<dbReference type="GO" id="GO:0006397">
    <property type="term" value="P:mRNA processing"/>
    <property type="evidence" value="ECO:0000316"/>
    <property type="project" value="TAIR"/>
</dbReference>
<dbReference type="GO" id="GO:0009414">
    <property type="term" value="P:response to water deprivation"/>
    <property type="evidence" value="ECO:0000315"/>
    <property type="project" value="TAIR"/>
</dbReference>
<dbReference type="GO" id="GO:0016070">
    <property type="term" value="P:RNA metabolic process"/>
    <property type="evidence" value="ECO:0000316"/>
    <property type="project" value="TAIR"/>
</dbReference>
<dbReference type="CDD" id="cd01728">
    <property type="entry name" value="LSm1"/>
    <property type="match status" value="1"/>
</dbReference>
<dbReference type="FunFam" id="2.30.30.100:FF:000029">
    <property type="entry name" value="U6 snRNA-associated Sm-like protein LSm1"/>
    <property type="match status" value="1"/>
</dbReference>
<dbReference type="Gene3D" id="2.30.30.100">
    <property type="match status" value="1"/>
</dbReference>
<dbReference type="InterPro" id="IPR034104">
    <property type="entry name" value="Lsm1"/>
</dbReference>
<dbReference type="InterPro" id="IPR010920">
    <property type="entry name" value="LSM_dom_sf"/>
</dbReference>
<dbReference type="InterPro" id="IPR044642">
    <property type="entry name" value="PTHR15588"/>
</dbReference>
<dbReference type="InterPro" id="IPR047575">
    <property type="entry name" value="Sm"/>
</dbReference>
<dbReference type="InterPro" id="IPR001163">
    <property type="entry name" value="Sm_dom_euk/arc"/>
</dbReference>
<dbReference type="PANTHER" id="PTHR15588">
    <property type="entry name" value="LSM1"/>
    <property type="match status" value="1"/>
</dbReference>
<dbReference type="PANTHER" id="PTHR15588:SF20">
    <property type="entry name" value="SM-LIKE PROTEIN LSM1B"/>
    <property type="match status" value="1"/>
</dbReference>
<dbReference type="Pfam" id="PF01423">
    <property type="entry name" value="LSM"/>
    <property type="match status" value="1"/>
</dbReference>
<dbReference type="SMART" id="SM00651">
    <property type="entry name" value="Sm"/>
    <property type="match status" value="1"/>
</dbReference>
<dbReference type="SUPFAM" id="SSF50182">
    <property type="entry name" value="Sm-like ribonucleoproteins"/>
    <property type="match status" value="1"/>
</dbReference>
<dbReference type="PROSITE" id="PS52002">
    <property type="entry name" value="SM"/>
    <property type="match status" value="1"/>
</dbReference>
<gene>
    <name evidence="4" type="primary">LSM1B</name>
    <name evidence="7" type="ordered locus">At3g14080</name>
    <name evidence="8" type="ORF">MAG2.4</name>
</gene>
<feature type="chain" id="PRO_0000431642" description="Sm-like protein LSM1B">
    <location>
        <begin position="1"/>
        <end position="128"/>
    </location>
</feature>
<feature type="domain" description="Sm" evidence="1">
    <location>
        <begin position="10"/>
        <end position="85"/>
    </location>
</feature>
<sequence>MSWAGPEEIYLSTSLASYLDRKLLVLLRDGRKLMGTLRSFDQFANAVLEGACERVIVGEQYCDIPLGLYVIRGENVVLIGELDTEREELPPHMIRVSEAEIKRAQKVEREASELRGTMRKRMEFLDFD</sequence>
<reference key="1">
    <citation type="journal article" date="2000" name="DNA Res.">
        <title>Structural analysis of Arabidopsis thaliana chromosome 3. II. Sequence features of the 4,251,695 bp regions covered by 90 P1, TAC and BAC clones.</title>
        <authorList>
            <person name="Kaneko T."/>
            <person name="Katoh T."/>
            <person name="Sato S."/>
            <person name="Nakamura Y."/>
            <person name="Asamizu E."/>
            <person name="Tabata S."/>
        </authorList>
    </citation>
    <scope>NUCLEOTIDE SEQUENCE [LARGE SCALE GENOMIC DNA]</scope>
    <source>
        <strain>cv. Columbia</strain>
    </source>
</reference>
<reference key="2">
    <citation type="journal article" date="2017" name="Plant J.">
        <title>Araport11: a complete reannotation of the Arabidopsis thaliana reference genome.</title>
        <authorList>
            <person name="Cheng C.Y."/>
            <person name="Krishnakumar V."/>
            <person name="Chan A.P."/>
            <person name="Thibaud-Nissen F."/>
            <person name="Schobel S."/>
            <person name="Town C.D."/>
        </authorList>
    </citation>
    <scope>GENOME REANNOTATION</scope>
    <source>
        <strain>cv. Columbia</strain>
    </source>
</reference>
<reference key="3">
    <citation type="journal article" date="2003" name="Science">
        <title>Empirical analysis of transcriptional activity in the Arabidopsis genome.</title>
        <authorList>
            <person name="Yamada K."/>
            <person name="Lim J."/>
            <person name="Dale J.M."/>
            <person name="Chen H."/>
            <person name="Shinn P."/>
            <person name="Palm C.J."/>
            <person name="Southwick A.M."/>
            <person name="Wu H.C."/>
            <person name="Kim C.J."/>
            <person name="Nguyen M."/>
            <person name="Pham P.K."/>
            <person name="Cheuk R.F."/>
            <person name="Karlin-Newmann G."/>
            <person name="Liu S.X."/>
            <person name="Lam B."/>
            <person name="Sakano H."/>
            <person name="Wu T."/>
            <person name="Yu G."/>
            <person name="Miranda M."/>
            <person name="Quach H.L."/>
            <person name="Tripp M."/>
            <person name="Chang C.H."/>
            <person name="Lee J.M."/>
            <person name="Toriumi M.J."/>
            <person name="Chan M.M."/>
            <person name="Tang C.C."/>
            <person name="Onodera C.S."/>
            <person name="Deng J.M."/>
            <person name="Akiyama K."/>
            <person name="Ansari Y."/>
            <person name="Arakawa T."/>
            <person name="Banh J."/>
            <person name="Banno F."/>
            <person name="Bowser L."/>
            <person name="Brooks S.Y."/>
            <person name="Carninci P."/>
            <person name="Chao Q."/>
            <person name="Choy N."/>
            <person name="Enju A."/>
            <person name="Goldsmith A.D."/>
            <person name="Gurjal M."/>
            <person name="Hansen N.F."/>
            <person name="Hayashizaki Y."/>
            <person name="Johnson-Hopson C."/>
            <person name="Hsuan V.W."/>
            <person name="Iida K."/>
            <person name="Karnes M."/>
            <person name="Khan S."/>
            <person name="Koesema E."/>
            <person name="Ishida J."/>
            <person name="Jiang P.X."/>
            <person name="Jones T."/>
            <person name="Kawai J."/>
            <person name="Kamiya A."/>
            <person name="Meyers C."/>
            <person name="Nakajima M."/>
            <person name="Narusaka M."/>
            <person name="Seki M."/>
            <person name="Sakurai T."/>
            <person name="Satou M."/>
            <person name="Tamse R."/>
            <person name="Vaysberg M."/>
            <person name="Wallender E.K."/>
            <person name="Wong C."/>
            <person name="Yamamura Y."/>
            <person name="Yuan S."/>
            <person name="Shinozaki K."/>
            <person name="Davis R.W."/>
            <person name="Theologis A."/>
            <person name="Ecker J.R."/>
        </authorList>
    </citation>
    <scope>NUCLEOTIDE SEQUENCE [LARGE SCALE MRNA]</scope>
    <source>
        <strain>cv. Columbia</strain>
    </source>
</reference>
<reference key="4">
    <citation type="submission" date="2002-03" db="EMBL/GenBank/DDBJ databases">
        <title>Full-length cDNA from Arabidopsis thaliana.</title>
        <authorList>
            <person name="Brover V.V."/>
            <person name="Troukhan M.E."/>
            <person name="Alexandrov N.A."/>
            <person name="Lu Y.-P."/>
            <person name="Flavell R.B."/>
            <person name="Feldmann K.A."/>
        </authorList>
    </citation>
    <scope>NUCLEOTIDE SEQUENCE [LARGE SCALE MRNA]</scope>
</reference>
<reference key="5">
    <citation type="journal article" date="2012" name="Plant Cell">
        <title>LSM proteins provide accurate splicing and decay of selected transcripts to ensure normal Arabidopsis development.</title>
        <authorList>
            <person name="Perea-Resa C."/>
            <person name="Hernandez-Verdeja T."/>
            <person name="Lopez-Cobollo R."/>
            <person name="del Mar Castellano M."/>
            <person name="Salinas J."/>
        </authorList>
    </citation>
    <scope>FUNCTION</scope>
    <scope>SUBUNIT</scope>
    <scope>INTERACTION WITH LSM2 AND LSM4</scope>
    <scope>SUBCELLULAR LOCATION</scope>
    <scope>TISSUE SPECIFICITY</scope>
    <scope>DISRUPTION PHENOTYPE</scope>
    <scope>GENE FAMILY</scope>
</reference>
<reference key="6">
    <citation type="journal article" date="2013" name="Nucleic Acids Res.">
        <title>Arabidopsis thaliana LSM proteins function in mRNA splicing and degradation.</title>
        <authorList>
            <person name="Golisz A."/>
            <person name="Sikorski P.J."/>
            <person name="Kruszka K."/>
            <person name="Kufel J."/>
        </authorList>
    </citation>
    <scope>IDENTIFICATION BY MASS SPECTROMETRY</scope>
    <scope>FUNCTION</scope>
    <scope>SUBUNIT</scope>
    <scope>SUBCELLULAR LOCATION</scope>
    <scope>TISSUE SPECIFICITY</scope>
    <scope>DISRUPTION PHENOTYPE</scope>
</reference>
<evidence type="ECO:0000255" key="1">
    <source>
        <dbReference type="PROSITE-ProRule" id="PRU01346"/>
    </source>
</evidence>
<evidence type="ECO:0000269" key="2">
    <source>
    </source>
</evidence>
<evidence type="ECO:0000269" key="3">
    <source>
    </source>
</evidence>
<evidence type="ECO:0000303" key="4">
    <source>
    </source>
</evidence>
<evidence type="ECO:0000303" key="5">
    <source>
    </source>
</evidence>
<evidence type="ECO:0000305" key="6"/>
<evidence type="ECO:0000312" key="7">
    <source>
        <dbReference type="Araport" id="AT3G14080"/>
    </source>
</evidence>
<evidence type="ECO:0000312" key="8">
    <source>
        <dbReference type="EMBL" id="BAB02972.1"/>
    </source>
</evidence>
<keyword id="KW-0963">Cytoplasm</keyword>
<keyword id="KW-0507">mRNA processing</keyword>
<keyword id="KW-1185">Reference proteome</keyword>
<keyword id="KW-0687">Ribonucleoprotein</keyword>
<keyword id="KW-0694">RNA-binding</keyword>
<organism>
    <name type="scientific">Arabidopsis thaliana</name>
    <name type="common">Mouse-ear cress</name>
    <dbReference type="NCBI Taxonomy" id="3702"/>
    <lineage>
        <taxon>Eukaryota</taxon>
        <taxon>Viridiplantae</taxon>
        <taxon>Streptophyta</taxon>
        <taxon>Embryophyta</taxon>
        <taxon>Tracheophyta</taxon>
        <taxon>Spermatophyta</taxon>
        <taxon>Magnoliopsida</taxon>
        <taxon>eudicotyledons</taxon>
        <taxon>Gunneridae</taxon>
        <taxon>Pentapetalae</taxon>
        <taxon>rosids</taxon>
        <taxon>malvids</taxon>
        <taxon>Brassicales</taxon>
        <taxon>Brassicaceae</taxon>
        <taxon>Camelineae</taxon>
        <taxon>Arabidopsis</taxon>
    </lineage>
</organism>
<comment type="function">
    <text evidence="2 3">Component of the cytoplasmic LSM1-LSM7 complex which is involved in mRNA degradation by promoting decapping and leading to accurate 5'-3' mRNA decay. LSM1A and LSM1B are essential for the formation of the cytoplasmic LSM1-LSM7 complex which regulates developmental gene expression by the decapping of specific development-related transcripts (PubMed:23221597, PubMed:23620288). Required for P-body formation during heat stress (PubMed:23221597).</text>
</comment>
<comment type="subunit">
    <text evidence="2 3">Component of the heptameric LSM1-LSM7 complex that forms a seven-membered ring structure with a donut shape. The LSM subunits are arranged in the order LSM1, LSM2, LSM3, LSM6, LSM5, LSM7 and LSM4 (PubMed:23221597, PubMed:23620288). LSM1B subunit interacts only with its two neighboring subunits, LSM2 and LSM4 (PubMed:23221597).</text>
</comment>
<comment type="interaction">
    <interactant intactId="EBI-4434198">
        <id>Q8LFL8</id>
    </interactant>
    <interactant intactId="EBI-1645478">
        <id>Q38845</id>
        <label>PP2AA1</label>
    </interactant>
    <organismsDiffer>false</organismsDiffer>
    <experiments>3</experiments>
</comment>
<comment type="interaction">
    <interactant intactId="EBI-4434198">
        <id>Q8LFL8</id>
    </interactant>
    <interactant intactId="EBI-25517419">
        <id>A0A1I9LQF0</id>
        <label>SAUR57</label>
    </interactant>
    <organismsDiffer>false</organismsDiffer>
    <experiments>3</experiments>
</comment>
<comment type="subcellular location">
    <subcellularLocation>
        <location evidence="2 3">Cytoplasm</location>
    </subcellularLocation>
    <subcellularLocation>
        <location evidence="2">Cytoplasm</location>
        <location evidence="2">P-body</location>
    </subcellularLocation>
    <text evidence="2">Translocates from cytosol to P-bodies upon heat stress.</text>
</comment>
<comment type="tissue specificity">
    <text evidence="2 3">Expressed in roots, leaves, stems, flowers and siliques.</text>
</comment>
<comment type="disruption phenotype">
    <text evidence="2 3">No visible phenotype under normal growth conditions, but the double mutants lsm1a and lsm1b show severe developmental alterations, such as delayed seed germination, reduced root length, epinastic, chlorotic and small cotyledons, small and serrated leaves, abnormal venation in cotyledons and leaves, dwarf plants with early flowering, short siliques with reduced seed number and small morphologically alterated seeds.</text>
</comment>
<comment type="similarity">
    <text evidence="6">Belongs to the snRNP Sm proteins family.</text>
</comment>
<comment type="sequence caution" evidence="6">
    <conflict type="erroneous gene model prediction">
        <sequence resource="EMBL-CDS" id="BAB02972"/>
    </conflict>
</comment>
<protein>
    <recommendedName>
        <fullName evidence="6">Sm-like protein LSM1B</fullName>
        <shortName evidence="5">AtLSM1b</shortName>
    </recommendedName>
</protein>